<organism>
    <name type="scientific">Drosophila melanogaster</name>
    <name type="common">Fruit fly</name>
    <dbReference type="NCBI Taxonomy" id="7227"/>
    <lineage>
        <taxon>Eukaryota</taxon>
        <taxon>Metazoa</taxon>
        <taxon>Ecdysozoa</taxon>
        <taxon>Arthropoda</taxon>
        <taxon>Hexapoda</taxon>
        <taxon>Insecta</taxon>
        <taxon>Pterygota</taxon>
        <taxon>Neoptera</taxon>
        <taxon>Endopterygota</taxon>
        <taxon>Diptera</taxon>
        <taxon>Brachycera</taxon>
        <taxon>Muscomorpha</taxon>
        <taxon>Ephydroidea</taxon>
        <taxon>Drosophilidae</taxon>
        <taxon>Drosophila</taxon>
        <taxon>Sophophora</taxon>
    </lineage>
</organism>
<evidence type="ECO:0000250" key="1">
    <source>
        <dbReference type="UniProtKB" id="Q9H0A0"/>
    </source>
</evidence>
<evidence type="ECO:0000255" key="2">
    <source>
        <dbReference type="HAMAP-Rule" id="MF_03211"/>
    </source>
</evidence>
<evidence type="ECO:0000256" key="3">
    <source>
        <dbReference type="SAM" id="MobiDB-lite"/>
    </source>
</evidence>
<evidence type="ECO:0000269" key="4">
    <source>
    </source>
</evidence>
<evidence type="ECO:0000269" key="5">
    <source>
    </source>
</evidence>
<evidence type="ECO:0000305" key="6"/>
<comment type="function">
    <text evidence="1 2 4">RNA cytidine acetyltransferase with specificity toward both 18S rRNA and tRNAs. Catalyzes the formation of N(4)-acetylcytidine (ac4C) in 18S rRNA. Required for early nucleolar cleavages of precursor rRNA at sites A0, A1 and A2 during 18S rRNA synthesis. Catalyzes the formation of ac4C in serine and leucine tRNAs. Requires a tRNA-binding adapter protein for full tRNA acetyltransferase activity but not for 18S rRNA acetylation (Probable). Polycomb group (PcG) protein. PcG proteins act by forming multiprotein complexes, which are required to maintain the transcriptionally repressive state of homeotic genes throughout development. PcG proteins are not required to initiate repression, but to maintain it during later stages of development. They probably act via the methylation of histones, rendering chromatin heritably changed in its expressibility (PubMed:11493925). Part of the small subunit (SSU) processome, first precursor of the small eukaryotic ribosomal subunit. During the assembly of the SSU processome in the nucleolus, many ribosome biogenesis factors, an RNA chaperone and ribosomal proteins associate with the nascent pre-rRNA and work in concert to generate RNA folding, modifications, rearrangements and cleavage as well as targeted degradation of pre-ribosomal RNA by the RNA exosome (By similarity).</text>
</comment>
<comment type="catalytic activity">
    <reaction evidence="2">
        <text>a cytidine in 18S rRNA + acetyl-CoA + ATP + H2O = an N(4)-acetylcytidine in 18S rRNA + ADP + phosphate + CoA + H(+)</text>
        <dbReference type="Rhea" id="RHEA:51424"/>
        <dbReference type="Rhea" id="RHEA-COMP:13575"/>
        <dbReference type="Rhea" id="RHEA-COMP:13576"/>
        <dbReference type="ChEBI" id="CHEBI:15377"/>
        <dbReference type="ChEBI" id="CHEBI:15378"/>
        <dbReference type="ChEBI" id="CHEBI:30616"/>
        <dbReference type="ChEBI" id="CHEBI:43474"/>
        <dbReference type="ChEBI" id="CHEBI:57287"/>
        <dbReference type="ChEBI" id="CHEBI:57288"/>
        <dbReference type="ChEBI" id="CHEBI:74900"/>
        <dbReference type="ChEBI" id="CHEBI:82748"/>
        <dbReference type="ChEBI" id="CHEBI:456216"/>
    </reaction>
</comment>
<comment type="catalytic activity">
    <reaction evidence="2">
        <text>a cytidine in tRNA + acetyl-CoA + ATP + H2O = an N(4)-acetylcytidine in tRNA + ADP + phosphate + CoA + H(+)</text>
        <dbReference type="Rhea" id="RHEA:53876"/>
        <dbReference type="Rhea" id="RHEA-COMP:13670"/>
        <dbReference type="Rhea" id="RHEA-COMP:13671"/>
        <dbReference type="ChEBI" id="CHEBI:15377"/>
        <dbReference type="ChEBI" id="CHEBI:15378"/>
        <dbReference type="ChEBI" id="CHEBI:30616"/>
        <dbReference type="ChEBI" id="CHEBI:43474"/>
        <dbReference type="ChEBI" id="CHEBI:57287"/>
        <dbReference type="ChEBI" id="CHEBI:57288"/>
        <dbReference type="ChEBI" id="CHEBI:74900"/>
        <dbReference type="ChEBI" id="CHEBI:82748"/>
        <dbReference type="ChEBI" id="CHEBI:456216"/>
    </reaction>
</comment>
<comment type="subunit">
    <text evidence="1 4">Component of the PRC1 complex (PSC, PC, PH and dRING1) in 0-12 hours Drosophila embryos. This complex is distinct from the Esc/E(z) complex, which contains many other PcG proteins like Esc, E(z), Su(z)12, HDAC1/Rpd3, Caf1-55 and probably Pho. The two complexes however cooperate and interact together during the first 3 hours of development to establish PcG silencing. Part of the small subunit (SSU) processome, composed of more than 70 proteins and the RNA chaperone small nucleolar RNA (snoRNA) U3 (By similarity).</text>
</comment>
<comment type="subcellular location">
    <subcellularLocation>
        <location evidence="2 4">Nucleus</location>
        <location evidence="2 4">Nucleolus</location>
    </subcellularLocation>
</comment>
<comment type="similarity">
    <text evidence="2">Belongs to the RNA cytidine acetyltransferase family. NAT10 subfamily.</text>
</comment>
<accession>Q9W3C1</accession>
<accession>Q6NR51</accession>
<gene>
    <name type="primary">l(1)G0020</name>
    <name type="ORF">CG1994</name>
</gene>
<feature type="chain" id="PRO_0000215886" description="RNA cytidine acetyltransferase">
    <location>
        <begin position="1"/>
        <end position="1008"/>
    </location>
</feature>
<feature type="domain" description="N-acetyltransferase" evidence="2">
    <location>
        <begin position="531"/>
        <end position="713"/>
    </location>
</feature>
<feature type="region of interest" description="Disordered" evidence="3">
    <location>
        <begin position="950"/>
        <end position="1008"/>
    </location>
</feature>
<feature type="compositionally biased region" description="Basic and acidic residues" evidence="3">
    <location>
        <begin position="970"/>
        <end position="982"/>
    </location>
</feature>
<feature type="compositionally biased region" description="Basic residues" evidence="3">
    <location>
        <begin position="989"/>
        <end position="1008"/>
    </location>
</feature>
<feature type="binding site" evidence="2">
    <location>
        <begin position="282"/>
        <end position="291"/>
    </location>
    <ligand>
        <name>ATP</name>
        <dbReference type="ChEBI" id="CHEBI:30616"/>
    </ligand>
</feature>
<feature type="binding site" evidence="2">
    <location>
        <position position="443"/>
    </location>
    <ligand>
        <name>ATP</name>
        <dbReference type="ChEBI" id="CHEBI:30616"/>
    </ligand>
</feature>
<feature type="binding site" evidence="2">
    <location>
        <begin position="601"/>
        <end position="603"/>
    </location>
    <ligand>
        <name>acetyl-CoA</name>
        <dbReference type="ChEBI" id="CHEBI:57288"/>
    </ligand>
</feature>
<feature type="binding site" evidence="2">
    <location>
        <begin position="608"/>
        <end position="614"/>
    </location>
    <ligand>
        <name>acetyl-CoA</name>
        <dbReference type="ChEBI" id="CHEBI:57288"/>
    </ligand>
</feature>
<feature type="binding site" evidence="2">
    <location>
        <position position="700"/>
    </location>
    <ligand>
        <name>acetyl-CoA</name>
        <dbReference type="ChEBI" id="CHEBI:57288"/>
    </ligand>
</feature>
<feature type="modified residue" description="Phosphoserine" evidence="5">
    <location>
        <position position="907"/>
    </location>
</feature>
<feature type="sequence conflict" description="In Ref. 3; AAQ23546." evidence="6" ref="3">
    <original>V</original>
    <variation>I</variation>
    <location>
        <position position="28"/>
    </location>
</feature>
<name>NAT10_DROME</name>
<keyword id="KW-0012">Acyltransferase</keyword>
<keyword id="KW-0067">ATP-binding</keyword>
<keyword id="KW-0217">Developmental protein</keyword>
<keyword id="KW-0547">Nucleotide-binding</keyword>
<keyword id="KW-0539">Nucleus</keyword>
<keyword id="KW-0597">Phosphoprotein</keyword>
<keyword id="KW-1185">Reference proteome</keyword>
<keyword id="KW-0678">Repressor</keyword>
<keyword id="KW-0698">rRNA processing</keyword>
<keyword id="KW-0804">Transcription</keyword>
<keyword id="KW-0805">Transcription regulation</keyword>
<keyword id="KW-0808">Transferase</keyword>
<keyword id="KW-0819">tRNA processing</keyword>
<proteinExistence type="evidence at protein level"/>
<protein>
    <recommendedName>
        <fullName evidence="2">RNA cytidine acetyltransferase</fullName>
        <ecNumber evidence="2">2.3.1.-</ecNumber>
    </recommendedName>
    <alternativeName>
        <fullName evidence="2">18S rRNA cytosine acetyltransferase</fullName>
    </alternativeName>
    <alternativeName>
        <fullName>Polycomb protein l(1)G0020</fullName>
    </alternativeName>
    <alternativeName>
        <fullName>p110</fullName>
    </alternativeName>
</protein>
<sequence length="1008" mass="112874">MVKKKIDNRIRVMIENGVKLGHRTMFIVIGDKARDQVPILYDILTKSTVKARPTVLWCYKNKDEAISNHGKKRAKKIAVGKVDVNEADLFDSFRVATTIHGRYYSETHAVLGRTYGVCVLQDFEALTPNLLARTVETVEGGGLIILLLKTLQSLKQLYTMSMDVHKRFRTEAHQTVTCRFNERLILSLADCKRCLVVNDDLTVLPLSSKTINVEPVNPAGAGRSPNEASLKELKESLLTVQPAGALVNLCKTYDQANAVAQFIEALVDKQLKPPMSLTAARGRGKSAALGLSIAAAVAFGYVNIYVTSPHPENLITLFEFVLKGFDALEYQEHADYTIIRSTNADYKKAIIRINITRSSRQTIQYIAPSDTHLLNAADLLLIDEAAAIPLPLVKKMIGPYLVFMASTINGYEGTGRSLSLKLISQLQKDNNARPPLKLEESIRYQENDDIEKWLINLLCLDASTVPSISSGCPTPDACELYYVDRDALFSYHKAAEAFLHRLVSIYVSSHYKNTPNDLQMMSDAPAHHLFCLLGPVQRMDALPEILVVIQVALEGQISAQSISDSLGRGKKAAGDLIPWNVAEQYGDRDFPKLCGVRIVRVATHPNYQRMGYGKRAIQLLKDYYARKHTNLEDGPVASKDAGKGIEEVEEEELSLLKEQIRPRSRIPTLLQRLHERVPEHVDYIGTSYGLTTELLKFWKNAGFVPVYLSQKSNELTAEHSCIMLHTPNATPWLGLYYQDFRRRVLKLMGKTFREFETKLCLALLKNKSVDTEGSALKVLDKPMLDVYFLPHDLQRLESYARQQSEFRLIIDLLTDIAQLYFQGRIDGLQLDLVQQGILLALGVQGKTVDALGLELNMPGNQLLAKFFDAMKRCNQCFRSVLEEHIEGGMLREADLSKGEELQPLTLSLDKELDQTAQKLSKQQRKELKRLKAEQLDEFQIKGTEEDWSKALETNGTGGGSGLLSVKSGVKRLDGPIETREDGDLAAPLSKKKKKNNPKQRRSQGKSLI</sequence>
<dbReference type="EC" id="2.3.1.-" evidence="2"/>
<dbReference type="EMBL" id="AE014298">
    <property type="protein sequence ID" value="AAF46410.2"/>
    <property type="molecule type" value="Genomic_DNA"/>
</dbReference>
<dbReference type="EMBL" id="BT010228">
    <property type="protein sequence ID" value="AAQ23546.1"/>
    <property type="molecule type" value="mRNA"/>
</dbReference>
<dbReference type="RefSeq" id="NP_572503.1">
    <property type="nucleotide sequence ID" value="NM_132275.2"/>
</dbReference>
<dbReference type="SMR" id="Q9W3C1"/>
<dbReference type="BioGRID" id="58270">
    <property type="interactions" value="31"/>
</dbReference>
<dbReference type="DIP" id="DIP-21542N"/>
<dbReference type="FunCoup" id="Q9W3C1">
    <property type="interactions" value="1861"/>
</dbReference>
<dbReference type="IntAct" id="Q9W3C1">
    <property type="interactions" value="54"/>
</dbReference>
<dbReference type="STRING" id="7227.FBpp0071217"/>
<dbReference type="GlyGen" id="Q9W3C1">
    <property type="glycosylation" value="1 site"/>
</dbReference>
<dbReference type="iPTMnet" id="Q9W3C1"/>
<dbReference type="PaxDb" id="7227-FBpp0071217"/>
<dbReference type="EnsemblMetazoa" id="FBtr0071280">
    <property type="protein sequence ID" value="FBpp0071217"/>
    <property type="gene ID" value="FBgn0027330"/>
</dbReference>
<dbReference type="GeneID" id="31811"/>
<dbReference type="KEGG" id="dme:Dmel_CG1994"/>
<dbReference type="AGR" id="FB:FBgn0027330"/>
<dbReference type="FlyBase" id="FBgn0027330">
    <property type="gene designation" value="l(1)G0020"/>
</dbReference>
<dbReference type="VEuPathDB" id="VectorBase:FBgn0027330"/>
<dbReference type="eggNOG" id="KOG2036">
    <property type="taxonomic scope" value="Eukaryota"/>
</dbReference>
<dbReference type="GeneTree" id="ENSGT00390000009140"/>
<dbReference type="InParanoid" id="Q9W3C1"/>
<dbReference type="OMA" id="HLHYIMS"/>
<dbReference type="OrthoDB" id="10067491at2759"/>
<dbReference type="PhylomeDB" id="Q9W3C1"/>
<dbReference type="SignaLink" id="Q9W3C1"/>
<dbReference type="BioGRID-ORCS" id="31811">
    <property type="hits" value="1 hit in 1 CRISPR screen"/>
</dbReference>
<dbReference type="GenomeRNAi" id="31811"/>
<dbReference type="PRO" id="PR:Q9W3C1"/>
<dbReference type="Proteomes" id="UP000000803">
    <property type="component" value="Chromosome X"/>
</dbReference>
<dbReference type="Bgee" id="FBgn0027330">
    <property type="expression patterns" value="Expressed in enteroblast (Drosophila) in digestive tract and 30 other cell types or tissues"/>
</dbReference>
<dbReference type="ExpressionAtlas" id="Q9W3C1">
    <property type="expression patterns" value="baseline and differential"/>
</dbReference>
<dbReference type="GO" id="GO:0005730">
    <property type="term" value="C:nucleolus"/>
    <property type="evidence" value="ECO:0000318"/>
    <property type="project" value="GO_Central"/>
</dbReference>
<dbReference type="GO" id="GO:0032040">
    <property type="term" value="C:small-subunit processome"/>
    <property type="evidence" value="ECO:0000250"/>
    <property type="project" value="UniProtKB"/>
</dbReference>
<dbReference type="GO" id="GO:1990883">
    <property type="term" value="F:18S rRNA cytidine N-acetyltransferase activity"/>
    <property type="evidence" value="ECO:0000318"/>
    <property type="project" value="GO_Central"/>
</dbReference>
<dbReference type="GO" id="GO:0005524">
    <property type="term" value="F:ATP binding"/>
    <property type="evidence" value="ECO:0007669"/>
    <property type="project" value="UniProtKB-UniRule"/>
</dbReference>
<dbReference type="GO" id="GO:0000049">
    <property type="term" value="F:tRNA binding"/>
    <property type="evidence" value="ECO:0000318"/>
    <property type="project" value="GO_Central"/>
</dbReference>
<dbReference type="GO" id="GO:0051392">
    <property type="term" value="F:tRNA N4-acetyltransferase activity"/>
    <property type="evidence" value="ECO:0000318"/>
    <property type="project" value="GO_Central"/>
</dbReference>
<dbReference type="GO" id="GO:0042274">
    <property type="term" value="P:ribosomal small subunit biogenesis"/>
    <property type="evidence" value="ECO:0000250"/>
    <property type="project" value="UniProtKB"/>
</dbReference>
<dbReference type="GO" id="GO:1904812">
    <property type="term" value="P:rRNA acetylation involved in maturation of SSU-rRNA"/>
    <property type="evidence" value="ECO:0000318"/>
    <property type="project" value="GO_Central"/>
</dbReference>
<dbReference type="GO" id="GO:0051391">
    <property type="term" value="P:tRNA acetylation"/>
    <property type="evidence" value="ECO:0000318"/>
    <property type="project" value="GO_Central"/>
</dbReference>
<dbReference type="GO" id="GO:0002101">
    <property type="term" value="P:tRNA wobble cytosine modification"/>
    <property type="evidence" value="ECO:0000318"/>
    <property type="project" value="GO_Central"/>
</dbReference>
<dbReference type="CDD" id="cd04301">
    <property type="entry name" value="NAT_SF"/>
    <property type="match status" value="1"/>
</dbReference>
<dbReference type="FunFam" id="3.40.50.300:FF:002218">
    <property type="entry name" value="tRNA(Met) cytidine acetyltransferase TmcA"/>
    <property type="match status" value="1"/>
</dbReference>
<dbReference type="Gene3D" id="3.40.50.11040">
    <property type="match status" value="1"/>
</dbReference>
<dbReference type="Gene3D" id="3.40.630.30">
    <property type="match status" value="1"/>
</dbReference>
<dbReference type="Gene3D" id="3.40.50.300">
    <property type="entry name" value="P-loop containing nucleotide triphosphate hydrolases"/>
    <property type="match status" value="1"/>
</dbReference>
<dbReference type="HAMAP" id="MF_03211">
    <property type="entry name" value="RNA_acetyltr_Nat10"/>
    <property type="match status" value="1"/>
</dbReference>
<dbReference type="InterPro" id="IPR016181">
    <property type="entry name" value="Acyl_CoA_acyltransferase"/>
</dbReference>
<dbReference type="InterPro" id="IPR000182">
    <property type="entry name" value="GNAT_dom"/>
</dbReference>
<dbReference type="InterPro" id="IPR033688">
    <property type="entry name" value="NAT10"/>
</dbReference>
<dbReference type="InterPro" id="IPR007807">
    <property type="entry name" value="NAT10/TcmA_helicase"/>
</dbReference>
<dbReference type="InterPro" id="IPR027417">
    <property type="entry name" value="P-loop_NTPase"/>
</dbReference>
<dbReference type="InterPro" id="IPR032672">
    <property type="entry name" value="TmcA/NAT10/Kre33"/>
</dbReference>
<dbReference type="InterPro" id="IPR013562">
    <property type="entry name" value="TmcA_N"/>
</dbReference>
<dbReference type="InterPro" id="IPR027992">
    <property type="entry name" value="tRNA_bind_dom"/>
</dbReference>
<dbReference type="PANTHER" id="PTHR10925">
    <property type="entry name" value="N-ACETYLTRANSFERASE 10"/>
    <property type="match status" value="1"/>
</dbReference>
<dbReference type="PANTHER" id="PTHR10925:SF5">
    <property type="entry name" value="RNA CYTIDINE ACETYLTRANSFERASE"/>
    <property type="match status" value="1"/>
</dbReference>
<dbReference type="Pfam" id="PF13718">
    <property type="entry name" value="GNAT_acetyltr_2"/>
    <property type="match status" value="1"/>
</dbReference>
<dbReference type="Pfam" id="PF05127">
    <property type="entry name" value="NAT10_TcmA_helicase"/>
    <property type="match status" value="1"/>
</dbReference>
<dbReference type="Pfam" id="PF08351">
    <property type="entry name" value="TmcA_N"/>
    <property type="match status" value="1"/>
</dbReference>
<dbReference type="Pfam" id="PF13725">
    <property type="entry name" value="tRNA_bind_2"/>
    <property type="match status" value="1"/>
</dbReference>
<dbReference type="SUPFAM" id="SSF55729">
    <property type="entry name" value="Acyl-CoA N-acyltransferases (Nat)"/>
    <property type="match status" value="1"/>
</dbReference>
<reference key="1">
    <citation type="journal article" date="2000" name="Science">
        <title>The genome sequence of Drosophila melanogaster.</title>
        <authorList>
            <person name="Adams M.D."/>
            <person name="Celniker S.E."/>
            <person name="Holt R.A."/>
            <person name="Evans C.A."/>
            <person name="Gocayne J.D."/>
            <person name="Amanatides P.G."/>
            <person name="Scherer S.E."/>
            <person name="Li P.W."/>
            <person name="Hoskins R.A."/>
            <person name="Galle R.F."/>
            <person name="George R.A."/>
            <person name="Lewis S.E."/>
            <person name="Richards S."/>
            <person name="Ashburner M."/>
            <person name="Henderson S.N."/>
            <person name="Sutton G.G."/>
            <person name="Wortman J.R."/>
            <person name="Yandell M.D."/>
            <person name="Zhang Q."/>
            <person name="Chen L.X."/>
            <person name="Brandon R.C."/>
            <person name="Rogers Y.-H.C."/>
            <person name="Blazej R.G."/>
            <person name="Champe M."/>
            <person name="Pfeiffer B.D."/>
            <person name="Wan K.H."/>
            <person name="Doyle C."/>
            <person name="Baxter E.G."/>
            <person name="Helt G."/>
            <person name="Nelson C.R."/>
            <person name="Miklos G.L.G."/>
            <person name="Abril J.F."/>
            <person name="Agbayani A."/>
            <person name="An H.-J."/>
            <person name="Andrews-Pfannkoch C."/>
            <person name="Baldwin D."/>
            <person name="Ballew R.M."/>
            <person name="Basu A."/>
            <person name="Baxendale J."/>
            <person name="Bayraktaroglu L."/>
            <person name="Beasley E.M."/>
            <person name="Beeson K.Y."/>
            <person name="Benos P.V."/>
            <person name="Berman B.P."/>
            <person name="Bhandari D."/>
            <person name="Bolshakov S."/>
            <person name="Borkova D."/>
            <person name="Botchan M.R."/>
            <person name="Bouck J."/>
            <person name="Brokstein P."/>
            <person name="Brottier P."/>
            <person name="Burtis K.C."/>
            <person name="Busam D.A."/>
            <person name="Butler H."/>
            <person name="Cadieu E."/>
            <person name="Center A."/>
            <person name="Chandra I."/>
            <person name="Cherry J.M."/>
            <person name="Cawley S."/>
            <person name="Dahlke C."/>
            <person name="Davenport L.B."/>
            <person name="Davies P."/>
            <person name="de Pablos B."/>
            <person name="Delcher A."/>
            <person name="Deng Z."/>
            <person name="Mays A.D."/>
            <person name="Dew I."/>
            <person name="Dietz S.M."/>
            <person name="Dodson K."/>
            <person name="Doup L.E."/>
            <person name="Downes M."/>
            <person name="Dugan-Rocha S."/>
            <person name="Dunkov B.C."/>
            <person name="Dunn P."/>
            <person name="Durbin K.J."/>
            <person name="Evangelista C.C."/>
            <person name="Ferraz C."/>
            <person name="Ferriera S."/>
            <person name="Fleischmann W."/>
            <person name="Fosler C."/>
            <person name="Gabrielian A.E."/>
            <person name="Garg N.S."/>
            <person name="Gelbart W.M."/>
            <person name="Glasser K."/>
            <person name="Glodek A."/>
            <person name="Gong F."/>
            <person name="Gorrell J.H."/>
            <person name="Gu Z."/>
            <person name="Guan P."/>
            <person name="Harris M."/>
            <person name="Harris N.L."/>
            <person name="Harvey D.A."/>
            <person name="Heiman T.J."/>
            <person name="Hernandez J.R."/>
            <person name="Houck J."/>
            <person name="Hostin D."/>
            <person name="Houston K.A."/>
            <person name="Howland T.J."/>
            <person name="Wei M.-H."/>
            <person name="Ibegwam C."/>
            <person name="Jalali M."/>
            <person name="Kalush F."/>
            <person name="Karpen G.H."/>
            <person name="Ke Z."/>
            <person name="Kennison J.A."/>
            <person name="Ketchum K.A."/>
            <person name="Kimmel B.E."/>
            <person name="Kodira C.D."/>
            <person name="Kraft C.L."/>
            <person name="Kravitz S."/>
            <person name="Kulp D."/>
            <person name="Lai Z."/>
            <person name="Lasko P."/>
            <person name="Lei Y."/>
            <person name="Levitsky A.A."/>
            <person name="Li J.H."/>
            <person name="Li Z."/>
            <person name="Liang Y."/>
            <person name="Lin X."/>
            <person name="Liu X."/>
            <person name="Mattei B."/>
            <person name="McIntosh T.C."/>
            <person name="McLeod M.P."/>
            <person name="McPherson D."/>
            <person name="Merkulov G."/>
            <person name="Milshina N.V."/>
            <person name="Mobarry C."/>
            <person name="Morris J."/>
            <person name="Moshrefi A."/>
            <person name="Mount S.M."/>
            <person name="Moy M."/>
            <person name="Murphy B."/>
            <person name="Murphy L."/>
            <person name="Muzny D.M."/>
            <person name="Nelson D.L."/>
            <person name="Nelson D.R."/>
            <person name="Nelson K.A."/>
            <person name="Nixon K."/>
            <person name="Nusskern D.R."/>
            <person name="Pacleb J.M."/>
            <person name="Palazzolo M."/>
            <person name="Pittman G.S."/>
            <person name="Pan S."/>
            <person name="Pollard J."/>
            <person name="Puri V."/>
            <person name="Reese M.G."/>
            <person name="Reinert K."/>
            <person name="Remington K."/>
            <person name="Saunders R.D.C."/>
            <person name="Scheeler F."/>
            <person name="Shen H."/>
            <person name="Shue B.C."/>
            <person name="Siden-Kiamos I."/>
            <person name="Simpson M."/>
            <person name="Skupski M.P."/>
            <person name="Smith T.J."/>
            <person name="Spier E."/>
            <person name="Spradling A.C."/>
            <person name="Stapleton M."/>
            <person name="Strong R."/>
            <person name="Sun E."/>
            <person name="Svirskas R."/>
            <person name="Tector C."/>
            <person name="Turner R."/>
            <person name="Venter E."/>
            <person name="Wang A.H."/>
            <person name="Wang X."/>
            <person name="Wang Z.-Y."/>
            <person name="Wassarman D.A."/>
            <person name="Weinstock G.M."/>
            <person name="Weissenbach J."/>
            <person name="Williams S.M."/>
            <person name="Woodage T."/>
            <person name="Worley K.C."/>
            <person name="Wu D."/>
            <person name="Yang S."/>
            <person name="Yao Q.A."/>
            <person name="Ye J."/>
            <person name="Yeh R.-F."/>
            <person name="Zaveri J.S."/>
            <person name="Zhan M."/>
            <person name="Zhang G."/>
            <person name="Zhao Q."/>
            <person name="Zheng L."/>
            <person name="Zheng X.H."/>
            <person name="Zhong F.N."/>
            <person name="Zhong W."/>
            <person name="Zhou X."/>
            <person name="Zhu S.C."/>
            <person name="Zhu X."/>
            <person name="Smith H.O."/>
            <person name="Gibbs R.A."/>
            <person name="Myers E.W."/>
            <person name="Rubin G.M."/>
            <person name="Venter J.C."/>
        </authorList>
    </citation>
    <scope>NUCLEOTIDE SEQUENCE [LARGE SCALE GENOMIC DNA]</scope>
    <source>
        <strain>Berkeley</strain>
    </source>
</reference>
<reference key="2">
    <citation type="journal article" date="2002" name="Genome Biol.">
        <title>Annotation of the Drosophila melanogaster euchromatic genome: a systematic review.</title>
        <authorList>
            <person name="Misra S."/>
            <person name="Crosby M.A."/>
            <person name="Mungall C.J."/>
            <person name="Matthews B.B."/>
            <person name="Campbell K.S."/>
            <person name="Hradecky P."/>
            <person name="Huang Y."/>
            <person name="Kaminker J.S."/>
            <person name="Millburn G.H."/>
            <person name="Prochnik S.E."/>
            <person name="Smith C.D."/>
            <person name="Tupy J.L."/>
            <person name="Whitfield E.J."/>
            <person name="Bayraktaroglu L."/>
            <person name="Berman B.P."/>
            <person name="Bettencourt B.R."/>
            <person name="Celniker S.E."/>
            <person name="de Grey A.D.N.J."/>
            <person name="Drysdale R.A."/>
            <person name="Harris N.L."/>
            <person name="Richter J."/>
            <person name="Russo S."/>
            <person name="Schroeder A.J."/>
            <person name="Shu S.Q."/>
            <person name="Stapleton M."/>
            <person name="Yamada C."/>
            <person name="Ashburner M."/>
            <person name="Gelbart W.M."/>
            <person name="Rubin G.M."/>
            <person name="Lewis S.E."/>
        </authorList>
    </citation>
    <scope>GENOME REANNOTATION</scope>
    <source>
        <strain>Berkeley</strain>
    </source>
</reference>
<reference key="3">
    <citation type="submission" date="2003-08" db="EMBL/GenBank/DDBJ databases">
        <authorList>
            <person name="Stapleton M."/>
            <person name="Brokstein P."/>
            <person name="Hong L."/>
            <person name="Agbayani A."/>
            <person name="Carlson J.W."/>
            <person name="Champe M."/>
            <person name="Chavez C."/>
            <person name="Dorsett V."/>
            <person name="Dresnek D."/>
            <person name="Farfan D."/>
            <person name="Frise E."/>
            <person name="George R.A."/>
            <person name="Gonzalez M."/>
            <person name="Guarin H."/>
            <person name="Kronmiller B."/>
            <person name="Li P.W."/>
            <person name="Liao G."/>
            <person name="Miranda A."/>
            <person name="Mungall C.J."/>
            <person name="Nunoo J."/>
            <person name="Pacleb J.M."/>
            <person name="Paragas V."/>
            <person name="Park S."/>
            <person name="Patel S."/>
            <person name="Phouanenavong S."/>
            <person name="Wan K.H."/>
            <person name="Yu C."/>
            <person name="Lewis S.E."/>
            <person name="Rubin G.M."/>
            <person name="Celniker S.E."/>
        </authorList>
    </citation>
    <scope>NUCLEOTIDE SEQUENCE [LARGE SCALE MRNA]</scope>
    <source>
        <strain>Berkeley</strain>
        <tissue>Embryo</tissue>
    </source>
</reference>
<reference key="4">
    <citation type="journal article" date="2001" name="Nature">
        <title>A Drosophila Polycomb group complex includes Zeste and dTAFII proteins.</title>
        <authorList>
            <person name="Saurin A.J."/>
            <person name="Shao Z."/>
            <person name="Erdjument-Bromage H."/>
            <person name="Tempst P."/>
            <person name="Kingston R.E."/>
        </authorList>
    </citation>
    <scope>FUNCTION</scope>
    <scope>SUBUNIT</scope>
    <scope>SUBCELLULAR LOCATION</scope>
</reference>
<reference key="5">
    <citation type="journal article" date="2008" name="J. Proteome Res.">
        <title>Phosphoproteome analysis of Drosophila melanogaster embryos.</title>
        <authorList>
            <person name="Zhai B."/>
            <person name="Villen J."/>
            <person name="Beausoleil S.A."/>
            <person name="Mintseris J."/>
            <person name="Gygi S.P."/>
        </authorList>
    </citation>
    <scope>PHOSPHORYLATION [LARGE SCALE ANALYSIS] AT SER-907</scope>
    <scope>IDENTIFICATION BY MASS SPECTROMETRY</scope>
    <source>
        <tissue>Embryo</tissue>
    </source>
</reference>